<keyword id="KW-0694">RNA-binding</keyword>
<keyword id="KW-0804">Transcription</keyword>
<keyword id="KW-0889">Transcription antitermination</keyword>
<keyword id="KW-0805">Transcription regulation</keyword>
<protein>
    <recommendedName>
        <fullName evidence="1">Transcription antitermination protein NusB</fullName>
    </recommendedName>
    <alternativeName>
        <fullName evidence="1">Antitermination factor NusB</fullName>
    </alternativeName>
</protein>
<gene>
    <name evidence="1" type="primary">nusB</name>
    <name type="ordered locus">CTLon_0204</name>
</gene>
<organism>
    <name type="scientific">Chlamydia trachomatis serovar L2b (strain UCH-1/proctitis)</name>
    <dbReference type="NCBI Taxonomy" id="471473"/>
    <lineage>
        <taxon>Bacteria</taxon>
        <taxon>Pseudomonadati</taxon>
        <taxon>Chlamydiota</taxon>
        <taxon>Chlamydiia</taxon>
        <taxon>Chlamydiales</taxon>
        <taxon>Chlamydiaceae</taxon>
        <taxon>Chlamydia/Chlamydophila group</taxon>
        <taxon>Chlamydia</taxon>
    </lineage>
</organism>
<sequence length="168" mass="18451">MSVMASDKACAPVRASRPFPKQKLRELVLQALYALEIDPEGEDSLVSLLMTEASVSKKNAAYALMFCRAIRANQPDLDALLDATIRTTTLARLTIIERNILRMMLFEHQQNQDCCPVPVAVLIAETTRLIKKFSYSEGSSLILAVLGSIFDHPAPALDTPLEPTSMCG</sequence>
<name>NUSB_CHLTB</name>
<proteinExistence type="inferred from homology"/>
<evidence type="ECO:0000255" key="1">
    <source>
        <dbReference type="HAMAP-Rule" id="MF_00073"/>
    </source>
</evidence>
<feature type="chain" id="PRO_1000092540" description="Transcription antitermination protein NusB">
    <location>
        <begin position="1"/>
        <end position="168"/>
    </location>
</feature>
<reference key="1">
    <citation type="journal article" date="2008" name="Genome Res.">
        <title>Chlamydia trachomatis: genome sequence analysis of lymphogranuloma venereum isolates.</title>
        <authorList>
            <person name="Thomson N.R."/>
            <person name="Holden M.T.G."/>
            <person name="Carder C."/>
            <person name="Lennard N."/>
            <person name="Lockey S.J."/>
            <person name="Marsh P."/>
            <person name="Skipp P."/>
            <person name="O'Connor C.D."/>
            <person name="Goodhead I."/>
            <person name="Norbertzcak H."/>
            <person name="Harris B."/>
            <person name="Ormond D."/>
            <person name="Rance R."/>
            <person name="Quail M.A."/>
            <person name="Parkhill J."/>
            <person name="Stephens R.S."/>
            <person name="Clarke I.N."/>
        </authorList>
    </citation>
    <scope>NUCLEOTIDE SEQUENCE [LARGE SCALE GENOMIC DNA]</scope>
    <source>
        <strain>UCH-1/proctitis</strain>
    </source>
</reference>
<dbReference type="EMBL" id="AM884177">
    <property type="protein sequence ID" value="CAP06602.1"/>
    <property type="molecule type" value="Genomic_DNA"/>
</dbReference>
<dbReference type="RefSeq" id="WP_009873443.1">
    <property type="nucleotide sequence ID" value="NC_010280.2"/>
</dbReference>
<dbReference type="SMR" id="B0BAU0"/>
<dbReference type="KEGG" id="ctl:CTLon_0204"/>
<dbReference type="HOGENOM" id="CLU_087843_3_3_0"/>
<dbReference type="Proteomes" id="UP001154401">
    <property type="component" value="Chromosome"/>
</dbReference>
<dbReference type="GO" id="GO:0005829">
    <property type="term" value="C:cytosol"/>
    <property type="evidence" value="ECO:0007669"/>
    <property type="project" value="TreeGrafter"/>
</dbReference>
<dbReference type="GO" id="GO:0003723">
    <property type="term" value="F:RNA binding"/>
    <property type="evidence" value="ECO:0007669"/>
    <property type="project" value="UniProtKB-UniRule"/>
</dbReference>
<dbReference type="GO" id="GO:0006353">
    <property type="term" value="P:DNA-templated transcription termination"/>
    <property type="evidence" value="ECO:0007669"/>
    <property type="project" value="UniProtKB-UniRule"/>
</dbReference>
<dbReference type="GO" id="GO:0031564">
    <property type="term" value="P:transcription antitermination"/>
    <property type="evidence" value="ECO:0007669"/>
    <property type="project" value="UniProtKB-KW"/>
</dbReference>
<dbReference type="CDD" id="cd00619">
    <property type="entry name" value="Terminator_NusB"/>
    <property type="match status" value="1"/>
</dbReference>
<dbReference type="Gene3D" id="1.10.940.10">
    <property type="entry name" value="NusB-like"/>
    <property type="match status" value="1"/>
</dbReference>
<dbReference type="HAMAP" id="MF_00073">
    <property type="entry name" value="NusB"/>
    <property type="match status" value="1"/>
</dbReference>
<dbReference type="InterPro" id="IPR035926">
    <property type="entry name" value="NusB-like_sf"/>
</dbReference>
<dbReference type="InterPro" id="IPR011605">
    <property type="entry name" value="NusB_fam"/>
</dbReference>
<dbReference type="InterPro" id="IPR006027">
    <property type="entry name" value="NusB_RsmB_TIM44"/>
</dbReference>
<dbReference type="NCBIfam" id="TIGR01951">
    <property type="entry name" value="nusB"/>
    <property type="match status" value="1"/>
</dbReference>
<dbReference type="NCBIfam" id="NF001230">
    <property type="entry name" value="PRK00202.2-5"/>
    <property type="match status" value="1"/>
</dbReference>
<dbReference type="PANTHER" id="PTHR11078:SF3">
    <property type="entry name" value="ANTITERMINATION NUSB DOMAIN-CONTAINING PROTEIN"/>
    <property type="match status" value="1"/>
</dbReference>
<dbReference type="PANTHER" id="PTHR11078">
    <property type="entry name" value="N UTILIZATION SUBSTANCE PROTEIN B-RELATED"/>
    <property type="match status" value="1"/>
</dbReference>
<dbReference type="Pfam" id="PF01029">
    <property type="entry name" value="NusB"/>
    <property type="match status" value="1"/>
</dbReference>
<dbReference type="SUPFAM" id="SSF48013">
    <property type="entry name" value="NusB-like"/>
    <property type="match status" value="1"/>
</dbReference>
<comment type="function">
    <text evidence="1">Involved in transcription antitermination. Required for transcription of ribosomal RNA (rRNA) genes. Binds specifically to the boxA antiterminator sequence of the ribosomal RNA (rrn) operons.</text>
</comment>
<comment type="similarity">
    <text evidence="1">Belongs to the NusB family.</text>
</comment>
<accession>B0BAU0</accession>